<sequence length="294" mass="33527">MSNLKEIKRKIKSVHNTQKTTNAMKLVSTAKLRKAEEAAKKSKVFAQKIDEVLSEIAFKINQYEGLDDKLPFFRKKDNIEKMDIIFVTADKGLCGGFNIKTIKAVNEMLEDCKTKKIKVRLRAIGKTGIEYFNFQNIEILEKYLDTSSSPDYDKACAIIQKAVDDFVNGVTDKIVIIHNGYKNMISQEIRINELLPVEAIVSKEEQKSESLMDLEPEDEEILNDLLKTYFEYNMYFSLVDSLAAEHSARMQAMDNATNNAKARVKQLNLAYNKARQESITTELIEIISGVESMK</sequence>
<reference key="1">
    <citation type="journal article" date="2008" name="Foodborne Pathog. Dis.">
        <title>The complete genome sequence and analysis of the human pathogen Campylobacter lari.</title>
        <authorList>
            <person name="Miller W.G."/>
            <person name="Wang G."/>
            <person name="Binnewies T.T."/>
            <person name="Parker C.T."/>
        </authorList>
    </citation>
    <scope>NUCLEOTIDE SEQUENCE [LARGE SCALE GENOMIC DNA]</scope>
    <source>
        <strain>RM2100 / D67 / ATCC BAA-1060</strain>
    </source>
</reference>
<gene>
    <name evidence="1" type="primary">atpG</name>
    <name type="ordered locus">Cla_0194</name>
</gene>
<organism>
    <name type="scientific">Campylobacter lari (strain RM2100 / D67 / ATCC BAA-1060)</name>
    <dbReference type="NCBI Taxonomy" id="306263"/>
    <lineage>
        <taxon>Bacteria</taxon>
        <taxon>Pseudomonadati</taxon>
        <taxon>Campylobacterota</taxon>
        <taxon>Epsilonproteobacteria</taxon>
        <taxon>Campylobacterales</taxon>
        <taxon>Campylobacteraceae</taxon>
        <taxon>Campylobacter</taxon>
    </lineage>
</organism>
<name>ATPG_CAMLR</name>
<dbReference type="EMBL" id="CP000932">
    <property type="protein sequence ID" value="ACM63557.1"/>
    <property type="molecule type" value="Genomic_DNA"/>
</dbReference>
<dbReference type="RefSeq" id="WP_012660941.1">
    <property type="nucleotide sequence ID" value="NC_012039.1"/>
</dbReference>
<dbReference type="SMR" id="B9KES2"/>
<dbReference type="STRING" id="306263.Cla_0194"/>
<dbReference type="KEGG" id="cla:CLA_0194"/>
<dbReference type="PATRIC" id="fig|306263.5.peg.193"/>
<dbReference type="eggNOG" id="COG0224">
    <property type="taxonomic scope" value="Bacteria"/>
</dbReference>
<dbReference type="HOGENOM" id="CLU_050669_0_1_7"/>
<dbReference type="Proteomes" id="UP000007727">
    <property type="component" value="Chromosome"/>
</dbReference>
<dbReference type="GO" id="GO:0005886">
    <property type="term" value="C:plasma membrane"/>
    <property type="evidence" value="ECO:0007669"/>
    <property type="project" value="UniProtKB-SubCell"/>
</dbReference>
<dbReference type="GO" id="GO:0045259">
    <property type="term" value="C:proton-transporting ATP synthase complex"/>
    <property type="evidence" value="ECO:0007669"/>
    <property type="project" value="UniProtKB-KW"/>
</dbReference>
<dbReference type="GO" id="GO:0005524">
    <property type="term" value="F:ATP binding"/>
    <property type="evidence" value="ECO:0007669"/>
    <property type="project" value="UniProtKB-UniRule"/>
</dbReference>
<dbReference type="GO" id="GO:0046933">
    <property type="term" value="F:proton-transporting ATP synthase activity, rotational mechanism"/>
    <property type="evidence" value="ECO:0007669"/>
    <property type="project" value="UniProtKB-UniRule"/>
</dbReference>
<dbReference type="GO" id="GO:0042777">
    <property type="term" value="P:proton motive force-driven plasma membrane ATP synthesis"/>
    <property type="evidence" value="ECO:0007669"/>
    <property type="project" value="UniProtKB-UniRule"/>
</dbReference>
<dbReference type="CDD" id="cd12151">
    <property type="entry name" value="F1-ATPase_gamma"/>
    <property type="match status" value="1"/>
</dbReference>
<dbReference type="Gene3D" id="3.40.1380.10">
    <property type="match status" value="1"/>
</dbReference>
<dbReference type="Gene3D" id="1.10.287.80">
    <property type="entry name" value="ATP synthase, gamma subunit, helix hairpin domain"/>
    <property type="match status" value="1"/>
</dbReference>
<dbReference type="HAMAP" id="MF_00815">
    <property type="entry name" value="ATP_synth_gamma_bact"/>
    <property type="match status" value="1"/>
</dbReference>
<dbReference type="InterPro" id="IPR035968">
    <property type="entry name" value="ATP_synth_F1_ATPase_gsu"/>
</dbReference>
<dbReference type="InterPro" id="IPR000131">
    <property type="entry name" value="ATP_synth_F1_gsu"/>
</dbReference>
<dbReference type="NCBIfam" id="TIGR01146">
    <property type="entry name" value="ATPsyn_F1gamma"/>
    <property type="match status" value="1"/>
</dbReference>
<dbReference type="PANTHER" id="PTHR11693">
    <property type="entry name" value="ATP SYNTHASE GAMMA CHAIN"/>
    <property type="match status" value="1"/>
</dbReference>
<dbReference type="PANTHER" id="PTHR11693:SF22">
    <property type="entry name" value="ATP SYNTHASE SUBUNIT GAMMA, MITOCHONDRIAL"/>
    <property type="match status" value="1"/>
</dbReference>
<dbReference type="Pfam" id="PF00231">
    <property type="entry name" value="ATP-synt"/>
    <property type="match status" value="1"/>
</dbReference>
<dbReference type="PRINTS" id="PR00126">
    <property type="entry name" value="ATPASEGAMMA"/>
</dbReference>
<dbReference type="SUPFAM" id="SSF52943">
    <property type="entry name" value="ATP synthase (F1-ATPase), gamma subunit"/>
    <property type="match status" value="1"/>
</dbReference>
<feature type="chain" id="PRO_1000148607" description="ATP synthase gamma chain">
    <location>
        <begin position="1"/>
        <end position="294"/>
    </location>
</feature>
<evidence type="ECO:0000255" key="1">
    <source>
        <dbReference type="HAMAP-Rule" id="MF_00815"/>
    </source>
</evidence>
<accession>B9KES2</accession>
<protein>
    <recommendedName>
        <fullName evidence="1">ATP synthase gamma chain</fullName>
    </recommendedName>
    <alternativeName>
        <fullName evidence="1">ATP synthase F1 sector gamma subunit</fullName>
    </alternativeName>
    <alternativeName>
        <fullName evidence="1">F-ATPase gamma subunit</fullName>
    </alternativeName>
</protein>
<comment type="function">
    <text evidence="1">Produces ATP from ADP in the presence of a proton gradient across the membrane. The gamma chain is believed to be important in regulating ATPase activity and the flow of protons through the CF(0) complex.</text>
</comment>
<comment type="subunit">
    <text evidence="1">F-type ATPases have 2 components, CF(1) - the catalytic core - and CF(0) - the membrane proton channel. CF(1) has five subunits: alpha(3), beta(3), gamma(1), delta(1), epsilon(1). CF(0) has three main subunits: a, b and c.</text>
</comment>
<comment type="subcellular location">
    <subcellularLocation>
        <location evidence="1">Cell inner membrane</location>
        <topology evidence="1">Peripheral membrane protein</topology>
    </subcellularLocation>
</comment>
<comment type="similarity">
    <text evidence="1">Belongs to the ATPase gamma chain family.</text>
</comment>
<proteinExistence type="inferred from homology"/>
<keyword id="KW-0066">ATP synthesis</keyword>
<keyword id="KW-0997">Cell inner membrane</keyword>
<keyword id="KW-1003">Cell membrane</keyword>
<keyword id="KW-0139">CF(1)</keyword>
<keyword id="KW-0375">Hydrogen ion transport</keyword>
<keyword id="KW-0406">Ion transport</keyword>
<keyword id="KW-0472">Membrane</keyword>
<keyword id="KW-1185">Reference proteome</keyword>
<keyword id="KW-0813">Transport</keyword>